<keyword id="KW-0025">Alternative splicing</keyword>
<keyword id="KW-0106">Calcium</keyword>
<keyword id="KW-0107">Calcium channel</keyword>
<keyword id="KW-0109">Calcium transport</keyword>
<keyword id="KW-0112">Calmodulin-binding</keyword>
<keyword id="KW-0407">Ion channel</keyword>
<keyword id="KW-0406">Ion transport</keyword>
<keyword id="KW-1071">Ligand-gated ion channel</keyword>
<keyword id="KW-0472">Membrane</keyword>
<keyword id="KW-0675">Receptor</keyword>
<keyword id="KW-1185">Reference proteome</keyword>
<keyword id="KW-0677">Repeat</keyword>
<keyword id="KW-0703">Sarcoplasmic reticulum</keyword>
<keyword id="KW-0812">Transmembrane</keyword>
<keyword id="KW-1133">Transmembrane helix</keyword>
<keyword id="KW-0813">Transport</keyword>
<proteinExistence type="evidence at protein level"/>
<dbReference type="EMBL" id="X68650">
    <property type="protein sequence ID" value="CAC16153.1"/>
    <property type="molecule type" value="mRNA"/>
</dbReference>
<dbReference type="PIR" id="S27272">
    <property type="entry name" value="S27272"/>
</dbReference>
<dbReference type="RefSeq" id="NP_001076231.1">
    <molecule id="Q9TS33-1"/>
    <property type="nucleotide sequence ID" value="NM_001082762.1"/>
</dbReference>
<dbReference type="SMR" id="Q9TS33"/>
<dbReference type="ComplexPortal" id="CPX-3157">
    <molecule id="Q9TS33-1"/>
    <property type="entry name" value="Ryanodine 3 complex"/>
</dbReference>
<dbReference type="CORUM" id="Q9TS33"/>
<dbReference type="FunCoup" id="Q9TS33">
    <property type="interactions" value="177"/>
</dbReference>
<dbReference type="STRING" id="9986.ENSOCUP00000045001"/>
<dbReference type="PaxDb" id="9986-ENSOCUP00000009882"/>
<dbReference type="GeneID" id="100009545"/>
<dbReference type="KEGG" id="ocu:100009545"/>
<dbReference type="CTD" id="6263"/>
<dbReference type="eggNOG" id="KOG2243">
    <property type="taxonomic scope" value="Eukaryota"/>
</dbReference>
<dbReference type="InParanoid" id="Q9TS33"/>
<dbReference type="OrthoDB" id="300855at2759"/>
<dbReference type="Proteomes" id="UP000001811">
    <property type="component" value="Unplaced"/>
</dbReference>
<dbReference type="GO" id="GO:0034704">
    <property type="term" value="C:calcium channel complex"/>
    <property type="evidence" value="ECO:0007669"/>
    <property type="project" value="TreeGrafter"/>
</dbReference>
<dbReference type="GO" id="GO:0016020">
    <property type="term" value="C:membrane"/>
    <property type="evidence" value="ECO:0000314"/>
    <property type="project" value="UniProtKB"/>
</dbReference>
<dbReference type="GO" id="GO:0042383">
    <property type="term" value="C:sarcolemma"/>
    <property type="evidence" value="ECO:0007669"/>
    <property type="project" value="TreeGrafter"/>
</dbReference>
<dbReference type="GO" id="GO:0033017">
    <property type="term" value="C:sarcoplasmic reticulum membrane"/>
    <property type="evidence" value="ECO:0000314"/>
    <property type="project" value="UniProtKB"/>
</dbReference>
<dbReference type="GO" id="GO:0005790">
    <property type="term" value="C:smooth endoplasmic reticulum"/>
    <property type="evidence" value="ECO:0007669"/>
    <property type="project" value="TreeGrafter"/>
</dbReference>
<dbReference type="GO" id="GO:0030018">
    <property type="term" value="C:Z disc"/>
    <property type="evidence" value="ECO:0007669"/>
    <property type="project" value="TreeGrafter"/>
</dbReference>
<dbReference type="GO" id="GO:0005509">
    <property type="term" value="F:calcium ion binding"/>
    <property type="evidence" value="ECO:0007669"/>
    <property type="project" value="InterPro"/>
</dbReference>
<dbReference type="GO" id="GO:0048763">
    <property type="term" value="F:calcium-induced calcium release activity"/>
    <property type="evidence" value="ECO:0000314"/>
    <property type="project" value="UniProtKB"/>
</dbReference>
<dbReference type="GO" id="GO:0005516">
    <property type="term" value="F:calmodulin binding"/>
    <property type="evidence" value="ECO:0007669"/>
    <property type="project" value="UniProtKB-KW"/>
</dbReference>
<dbReference type="GO" id="GO:0042802">
    <property type="term" value="F:identical protein binding"/>
    <property type="evidence" value="ECO:0000353"/>
    <property type="project" value="IntAct"/>
</dbReference>
<dbReference type="GO" id="GO:0005219">
    <property type="term" value="F:ryanodine-sensitive calcium-release channel activity"/>
    <property type="evidence" value="ECO:0000314"/>
    <property type="project" value="UniProtKB"/>
</dbReference>
<dbReference type="GO" id="GO:0070588">
    <property type="term" value="P:calcium ion transmembrane transport"/>
    <property type="evidence" value="ECO:0000314"/>
    <property type="project" value="UniProtKB"/>
</dbReference>
<dbReference type="GO" id="GO:0071318">
    <property type="term" value="P:cellular response to ATP"/>
    <property type="evidence" value="ECO:0000314"/>
    <property type="project" value="UniProtKB"/>
</dbReference>
<dbReference type="GO" id="GO:0071313">
    <property type="term" value="P:cellular response to caffeine"/>
    <property type="evidence" value="ECO:0000314"/>
    <property type="project" value="UniProtKB"/>
</dbReference>
<dbReference type="GO" id="GO:0071277">
    <property type="term" value="P:cellular response to calcium ion"/>
    <property type="evidence" value="ECO:0000314"/>
    <property type="project" value="UniProtKB"/>
</dbReference>
<dbReference type="GO" id="GO:0071286">
    <property type="term" value="P:cellular response to magnesium ion"/>
    <property type="evidence" value="ECO:0000314"/>
    <property type="project" value="UniProtKB"/>
</dbReference>
<dbReference type="GO" id="GO:0006874">
    <property type="term" value="P:intracellular calcium ion homeostasis"/>
    <property type="evidence" value="ECO:0000304"/>
    <property type="project" value="UniProtKB"/>
</dbReference>
<dbReference type="GO" id="GO:0006936">
    <property type="term" value="P:muscle contraction"/>
    <property type="evidence" value="ECO:0000303"/>
    <property type="project" value="UniProtKB"/>
</dbReference>
<dbReference type="GO" id="GO:0051289">
    <property type="term" value="P:protein homotetramerization"/>
    <property type="evidence" value="ECO:0000314"/>
    <property type="project" value="UniProtKB"/>
</dbReference>
<dbReference type="GO" id="GO:0051209">
    <property type="term" value="P:release of sequestered calcium ion into cytosol"/>
    <property type="evidence" value="ECO:0000314"/>
    <property type="project" value="UniProtKB"/>
</dbReference>
<dbReference type="GO" id="GO:0014808">
    <property type="term" value="P:release of sequestered calcium ion into cytosol by sarcoplasmic reticulum"/>
    <property type="evidence" value="ECO:0007669"/>
    <property type="project" value="TreeGrafter"/>
</dbReference>
<dbReference type="GO" id="GO:0006941">
    <property type="term" value="P:striated muscle contraction"/>
    <property type="evidence" value="ECO:0007669"/>
    <property type="project" value="TreeGrafter"/>
</dbReference>
<dbReference type="CDD" id="cd23292">
    <property type="entry name" value="beta-trefoil_MIR_RyR3"/>
    <property type="match status" value="1"/>
</dbReference>
<dbReference type="CDD" id="cd12877">
    <property type="entry name" value="SPRY1_RyR"/>
    <property type="match status" value="1"/>
</dbReference>
<dbReference type="CDD" id="cd12879">
    <property type="entry name" value="SPRY3_RyR"/>
    <property type="match status" value="1"/>
</dbReference>
<dbReference type="FunFam" id="2.80.10.50:FF:000009">
    <property type="entry name" value="Ryanodine receptor 1 (skeletal)"/>
    <property type="match status" value="1"/>
</dbReference>
<dbReference type="FunFam" id="1.10.238.10:FF:000040">
    <property type="entry name" value="Ryanodine receptor 2"/>
    <property type="match status" value="1"/>
</dbReference>
<dbReference type="FunFam" id="1.10.490.160:FF:000001">
    <property type="entry name" value="Ryanodine receptor 2 (Cardiac)"/>
    <property type="match status" value="1"/>
</dbReference>
<dbReference type="FunFam" id="2.80.10.50:FF:000006">
    <property type="entry name" value="Ryanodine receptor 2 (Cardiac)"/>
    <property type="match status" value="1"/>
</dbReference>
<dbReference type="FunFam" id="2.60.120.920:FF:000024">
    <property type="entry name" value="Ryanodine receptor 3"/>
    <property type="match status" value="1"/>
</dbReference>
<dbReference type="FunFam" id="1.10.287.70:FF:000017">
    <property type="entry name" value="ryanodine receptor isoform X2"/>
    <property type="match status" value="1"/>
</dbReference>
<dbReference type="FunFam" id="1.25.10.30:FF:000002">
    <property type="entry name" value="ryanodine receptor isoform X2"/>
    <property type="match status" value="1"/>
</dbReference>
<dbReference type="FunFam" id="2.60.120.920:FF:000002">
    <property type="entry name" value="ryanodine receptor isoform X2"/>
    <property type="match status" value="1"/>
</dbReference>
<dbReference type="FunFam" id="2.60.120.920:FF:000003">
    <property type="entry name" value="ryanodine receptor isoform X2"/>
    <property type="match status" value="1"/>
</dbReference>
<dbReference type="Gene3D" id="1.10.287.70">
    <property type="match status" value="1"/>
</dbReference>
<dbReference type="Gene3D" id="1.10.490.160">
    <property type="match status" value="2"/>
</dbReference>
<dbReference type="Gene3D" id="2.60.120.920">
    <property type="match status" value="3"/>
</dbReference>
<dbReference type="Gene3D" id="2.80.10.50">
    <property type="match status" value="2"/>
</dbReference>
<dbReference type="Gene3D" id="6.20.350.10">
    <property type="match status" value="1"/>
</dbReference>
<dbReference type="Gene3D" id="1.10.238.10">
    <property type="entry name" value="EF-hand"/>
    <property type="match status" value="1"/>
</dbReference>
<dbReference type="Gene3D" id="1.25.10.30">
    <property type="entry name" value="IP3 receptor type 1 binding core, RIH domain"/>
    <property type="match status" value="1"/>
</dbReference>
<dbReference type="InterPro" id="IPR001870">
    <property type="entry name" value="B30.2/SPRY"/>
</dbReference>
<dbReference type="InterPro" id="IPR043136">
    <property type="entry name" value="B30.2/SPRY_sf"/>
</dbReference>
<dbReference type="InterPro" id="IPR013320">
    <property type="entry name" value="ConA-like_dom_sf"/>
</dbReference>
<dbReference type="InterPro" id="IPR011992">
    <property type="entry name" value="EF-hand-dom_pair"/>
</dbReference>
<dbReference type="InterPro" id="IPR002048">
    <property type="entry name" value="EF_hand_dom"/>
</dbReference>
<dbReference type="InterPro" id="IPR014821">
    <property type="entry name" value="Ins145_P3_rcpt"/>
</dbReference>
<dbReference type="InterPro" id="IPR005821">
    <property type="entry name" value="Ion_trans_dom"/>
</dbReference>
<dbReference type="InterPro" id="IPR036300">
    <property type="entry name" value="MIR_dom_sf"/>
</dbReference>
<dbReference type="InterPro" id="IPR016093">
    <property type="entry name" value="MIR_motif"/>
</dbReference>
<dbReference type="InterPro" id="IPR013662">
    <property type="entry name" value="RIH_assoc-dom"/>
</dbReference>
<dbReference type="InterPro" id="IPR000699">
    <property type="entry name" value="RIH_dom"/>
</dbReference>
<dbReference type="InterPro" id="IPR013333">
    <property type="entry name" value="Ryan_recept"/>
</dbReference>
<dbReference type="InterPro" id="IPR015925">
    <property type="entry name" value="Ryanodine_IP3_receptor"/>
</dbReference>
<dbReference type="InterPro" id="IPR003032">
    <property type="entry name" value="Ryanodine_rcpt"/>
</dbReference>
<dbReference type="InterPro" id="IPR009460">
    <property type="entry name" value="Ryanrecept_TM4-6"/>
</dbReference>
<dbReference type="InterPro" id="IPR048581">
    <property type="entry name" value="RYDR_Jsol"/>
</dbReference>
<dbReference type="InterPro" id="IPR035910">
    <property type="entry name" value="RyR/IP3R_RIH_dom_sf"/>
</dbReference>
<dbReference type="InterPro" id="IPR035761">
    <property type="entry name" value="SPRY1_RyR"/>
</dbReference>
<dbReference type="InterPro" id="IPR035762">
    <property type="entry name" value="SPRY3_RyR"/>
</dbReference>
<dbReference type="InterPro" id="IPR003877">
    <property type="entry name" value="SPRY_dom"/>
</dbReference>
<dbReference type="PANTHER" id="PTHR46399">
    <property type="entry name" value="B30.2/SPRY DOMAIN-CONTAINING PROTEIN"/>
    <property type="match status" value="1"/>
</dbReference>
<dbReference type="PANTHER" id="PTHR46399:SF9">
    <property type="entry name" value="RYANODINE RECEPTOR 3"/>
    <property type="match status" value="1"/>
</dbReference>
<dbReference type="Pfam" id="PF08709">
    <property type="entry name" value="Ins145_P3_rec"/>
    <property type="match status" value="1"/>
</dbReference>
<dbReference type="Pfam" id="PF00520">
    <property type="entry name" value="Ion_trans"/>
    <property type="match status" value="1"/>
</dbReference>
<dbReference type="Pfam" id="PF02815">
    <property type="entry name" value="MIR"/>
    <property type="match status" value="1"/>
</dbReference>
<dbReference type="Pfam" id="PF08454">
    <property type="entry name" value="RIH_assoc"/>
    <property type="match status" value="1"/>
</dbReference>
<dbReference type="Pfam" id="PF06459">
    <property type="entry name" value="RR_TM4-6"/>
    <property type="match status" value="1"/>
</dbReference>
<dbReference type="Pfam" id="PF01365">
    <property type="entry name" value="RYDR_ITPR"/>
    <property type="match status" value="2"/>
</dbReference>
<dbReference type="Pfam" id="PF21119">
    <property type="entry name" value="RYDR_Jsol"/>
    <property type="match status" value="1"/>
</dbReference>
<dbReference type="Pfam" id="PF02026">
    <property type="entry name" value="RyR"/>
    <property type="match status" value="4"/>
</dbReference>
<dbReference type="Pfam" id="PF00622">
    <property type="entry name" value="SPRY"/>
    <property type="match status" value="3"/>
</dbReference>
<dbReference type="PRINTS" id="PR00795">
    <property type="entry name" value="RYANODINER"/>
</dbReference>
<dbReference type="SMART" id="SM00472">
    <property type="entry name" value="MIR"/>
    <property type="match status" value="4"/>
</dbReference>
<dbReference type="SMART" id="SM00449">
    <property type="entry name" value="SPRY"/>
    <property type="match status" value="3"/>
</dbReference>
<dbReference type="SUPFAM" id="SSF49899">
    <property type="entry name" value="Concanavalin A-like lectins/glucanases"/>
    <property type="match status" value="3"/>
</dbReference>
<dbReference type="SUPFAM" id="SSF47473">
    <property type="entry name" value="EF-hand"/>
    <property type="match status" value="1"/>
</dbReference>
<dbReference type="SUPFAM" id="SSF100909">
    <property type="entry name" value="IP3 receptor type 1 binding core, domain 2"/>
    <property type="match status" value="2"/>
</dbReference>
<dbReference type="SUPFAM" id="SSF82109">
    <property type="entry name" value="MIR domain"/>
    <property type="match status" value="2"/>
</dbReference>
<dbReference type="PROSITE" id="PS50188">
    <property type="entry name" value="B302_SPRY"/>
    <property type="match status" value="3"/>
</dbReference>
<dbReference type="PROSITE" id="PS50919">
    <property type="entry name" value="MIR"/>
    <property type="match status" value="5"/>
</dbReference>
<reference key="1">
    <citation type="journal article" date="1992" name="FEBS Lett.">
        <title>Primary structure and distribution of a novel ryanodine receptor/calcium release channel from rabbit brain.</title>
        <authorList>
            <person name="Hakamata Y."/>
            <person name="Nakai J."/>
            <person name="Takeshima H."/>
            <person name="Imoto K."/>
        </authorList>
    </citation>
    <scope>NUCLEOTIDE SEQUENCE [MRNA] (ISOFORM 1)</scope>
    <scope>TISSUE SPECIFICITY</scope>
    <source>
        <tissue>Brain</tissue>
    </source>
</reference>
<reference key="2">
    <citation type="journal article" date="1997" name="J. Biol. Chem.">
        <title>Functional characterization of the recombinant type 3 Ca2+ release channel (ryanodine receptor) expressed in HEK293 cells.</title>
        <authorList>
            <person name="Chen S.R."/>
            <person name="Li X."/>
            <person name="Ebisawa K."/>
            <person name="Zhang L."/>
        </authorList>
    </citation>
    <scope>NUCLEOTIDE SEQUENCE [MRNA] (ISOFORMS 1 AND 3)</scope>
    <scope>FUNCTION</scope>
    <scope>TRANSPORTER ACTIVITY</scope>
    <scope>SUBCELLULAR LOCATION</scope>
    <scope>ACTIVITY REGULATION BY RYANODINE; CALMODULIN; CALCIUM LEVELS; MAGNESIUM; ATP; CAFFEINE AND RUTHENIUM RED</scope>
    <scope>TISSUE SPECIFICITY</scope>
    <source>
        <tissue>Uterus</tissue>
    </source>
</reference>
<reference key="3">
    <citation type="journal article" date="2003" name="J. Biol. Chem.">
        <title>Smooth muscle tissues express a major dominant negative splice variant of the type 3 Ca2+ release channel (ryanodine receptor).</title>
        <authorList>
            <person name="Jiang D."/>
            <person name="Xiao B."/>
            <person name="Li X."/>
            <person name="Chen S.R."/>
        </authorList>
    </citation>
    <scope>NUCLEOTIDE SEQUENCE [MRNA] (ISOFORMS 1; 2; 3 AND 4)</scope>
    <scope>ALTERNATIVE SPLICING</scope>
    <scope>FUNCTION (ISOFORM 2)</scope>
    <scope>TRANSPORTER ACTIVITY</scope>
    <scope>SUBUNIT</scope>
    <scope>INTERACTION WITH RYR2</scope>
    <scope>TISSUE SPECIFICITY</scope>
    <source>
        <tissue>Uterus</tissue>
    </source>
</reference>
<reference key="4">
    <citation type="journal article" date="1998" name="J. Biol. Chem.">
        <title>Molecular identification of the ryanodine receptor Ca2+ sensor.</title>
        <authorList>
            <person name="Chen S.R."/>
            <person name="Ebisawa K."/>
            <person name="Li X."/>
            <person name="Zhang L."/>
        </authorList>
    </citation>
    <scope>FUNCTION</scope>
    <scope>TRANSPORTER ACTIVITY</scope>
    <scope>SUBUNIT</scope>
    <scope>MUTAGENESIS OF GLU-3885</scope>
</reference>
<reference key="5">
    <citation type="journal article" date="1999" name="J. Biol. Chem.">
        <title>Further characterization of the type 3 ryanodine receptor (RyR3) purified from rabbit diaphragm.</title>
        <authorList>
            <person name="Murayama T."/>
            <person name="Oba T."/>
            <person name="Katayama E."/>
            <person name="Oyamada H."/>
            <person name="Oguchi K."/>
            <person name="Kobayashi M."/>
            <person name="Otsuka K."/>
            <person name="Ogawa Y."/>
        </authorList>
    </citation>
    <scope>FUNCTION</scope>
    <scope>SUBUNIT</scope>
    <scope>DOMAIN</scope>
    <scope>INTERACTION WITH FKBP1A</scope>
    <scope>SUBCELLULAR LOCATION</scope>
    <scope>MEMBRANE TOPOLOGY</scope>
    <scope>ELECTRON MICROSCOPY</scope>
    <scope>REGULATION BY RYANODINE; CALCIUM LEVELS; MAGNESIUM; ATP AND CAFFEINE</scope>
    <scope>TISSUE SPECIFICITY</scope>
</reference>
<reference key="6">
    <citation type="journal article" date="2002" name="J. Biol. Chem.">
        <title>Isoform-dependent formation of heteromeric Ca2+ release channels (ryanodine receptors).</title>
        <authorList>
            <person name="Xiao B."/>
            <person name="Masumiya H."/>
            <person name="Jiang D."/>
            <person name="Wang R."/>
            <person name="Sei Y."/>
            <person name="Zhang L."/>
            <person name="Murayama T."/>
            <person name="Ogawa Y."/>
            <person name="Lai F.A."/>
            <person name="Wagenknecht T."/>
            <person name="Chen S.R."/>
        </authorList>
    </citation>
    <scope>INTERACTION WITH RYR2</scope>
    <scope>FUNCTION</scope>
</reference>
<reference key="7">
    <citation type="journal article" date="2005" name="Biochem. Biophys. Res. Commun.">
        <title>Selective expression of the type 3 isoform of ryanodine receptor Ca2+ release channel (RyR3) in a subset of slow fibers in diaphragm and cephalic muscles of adult rabbits.</title>
        <authorList>
            <person name="Conti A."/>
            <person name="Reggiani C."/>
            <person name="Sorrentino V."/>
        </authorList>
    </citation>
    <scope>SUBCELLULAR LOCATION</scope>
    <scope>TISSUE SPECIFICITY</scope>
    <scope>DEVELOPMENTAL STAGE</scope>
</reference>
<reference key="8">
    <citation type="journal article" date="2005" name="Biochemistry">
        <title>Calmodulin regulation and identification of calmodulin binding region of type-3 ryanodine receptor calcium release channel.</title>
        <authorList>
            <person name="Yamaguchi N."/>
            <person name="Xu L."/>
            <person name="Pasek D.A."/>
            <person name="Evans K.E."/>
            <person name="Chen S.R."/>
            <person name="Meissner G."/>
        </authorList>
    </citation>
    <scope>FUNCTION</scope>
    <scope>INTERACTION WITH CALM</scope>
    <scope>SUBCELLULAR LOCATION</scope>
    <scope>TISSUE SPECIFICITY</scope>
</reference>
<reference key="9">
    <citation type="journal article" date="2008" name="Proc. Natl. Acad. Sci. U.S.A.">
        <title>Selenoprotein N is required for ryanodine receptor calcium release channel activity in human and zebrafish muscle.</title>
        <authorList>
            <person name="Jurynec M.J."/>
            <person name="Xia R."/>
            <person name="Mackrill J.J."/>
            <person name="Gunther D."/>
            <person name="Crawford T."/>
            <person name="Flanigan K.M."/>
            <person name="Abramson J.J."/>
            <person name="Howard M.T."/>
            <person name="Grunwald D.J."/>
        </authorList>
    </citation>
    <scope>INTERACTION WITH SELENON</scope>
    <scope>SUBCELLULAR LOCATION</scope>
</reference>
<evidence type="ECO:0000250" key="1"/>
<evidence type="ECO:0000255" key="2"/>
<evidence type="ECO:0000255" key="3">
    <source>
        <dbReference type="PROSITE-ProRule" id="PRU00131"/>
    </source>
</evidence>
<evidence type="ECO:0000255" key="4">
    <source>
        <dbReference type="PROSITE-ProRule" id="PRU00548"/>
    </source>
</evidence>
<evidence type="ECO:0000256" key="5">
    <source>
        <dbReference type="SAM" id="MobiDB-lite"/>
    </source>
</evidence>
<evidence type="ECO:0000269" key="6">
    <source>
    </source>
</evidence>
<evidence type="ECO:0000269" key="7">
    <source>
    </source>
</evidence>
<evidence type="ECO:0000269" key="8">
    <source>
    </source>
</evidence>
<evidence type="ECO:0000269" key="9">
    <source>
    </source>
</evidence>
<evidence type="ECO:0000269" key="10">
    <source>
    </source>
</evidence>
<evidence type="ECO:0000269" key="11">
    <source>
    </source>
</evidence>
<evidence type="ECO:0000269" key="12">
    <source>
    </source>
</evidence>
<evidence type="ECO:0000269" key="13">
    <source>
    </source>
</evidence>
<evidence type="ECO:0000269" key="14">
    <source>
    </source>
</evidence>
<evidence type="ECO:0000303" key="15">
    <source>
    </source>
</evidence>
<evidence type="ECO:0000303" key="16">
    <source>
    </source>
</evidence>
<evidence type="ECO:0000305" key="17"/>
<evidence type="ECO:0000305" key="18">
    <source>
    </source>
</evidence>
<evidence type="ECO:0000305" key="19">
    <source>
    </source>
</evidence>
<feature type="chain" id="PRO_0000415649" description="Ryanodine receptor 3">
    <location>
        <begin position="1"/>
        <end position="4872"/>
    </location>
</feature>
<feature type="topological domain" description="Cytoplasmic" evidence="2">
    <location>
        <begin position="1"/>
        <end position="4188"/>
    </location>
</feature>
<feature type="transmembrane region" description="Helical" evidence="2">
    <location>
        <begin position="4189"/>
        <end position="4209"/>
    </location>
</feature>
<feature type="transmembrane region" description="Helical" evidence="2">
    <location>
        <begin position="4412"/>
        <end position="4432"/>
    </location>
</feature>
<feature type="transmembrane region" description="Helical" evidence="2">
    <location>
        <begin position="4487"/>
        <end position="4507"/>
    </location>
</feature>
<feature type="transmembrane region" description="Helical" evidence="2">
    <location>
        <begin position="4612"/>
        <end position="4632"/>
    </location>
</feature>
<feature type="transmembrane region" description="Helical" evidence="2">
    <location>
        <begin position="4635"/>
        <end position="4655"/>
    </location>
</feature>
<feature type="transmembrane region" description="Helical" evidence="2">
    <location>
        <begin position="4674"/>
        <end position="4694"/>
    </location>
</feature>
<feature type="intramembrane region" description="Pore-forming" evidence="1">
    <location>
        <begin position="4725"/>
        <end position="4734"/>
    </location>
</feature>
<feature type="transmembrane region" description="Helical" evidence="2">
    <location>
        <begin position="4755"/>
        <end position="4775"/>
    </location>
</feature>
<feature type="topological domain" description="Cytoplasmic" evidence="2">
    <location>
        <begin position="4776"/>
        <end position="4872"/>
    </location>
</feature>
<feature type="domain" description="MIR 1" evidence="3">
    <location>
        <begin position="100"/>
        <end position="155"/>
    </location>
</feature>
<feature type="domain" description="MIR 2" evidence="3">
    <location>
        <begin position="162"/>
        <end position="207"/>
    </location>
</feature>
<feature type="domain" description="MIR 3" evidence="3">
    <location>
        <begin position="215"/>
        <end position="269"/>
    </location>
</feature>
<feature type="domain" description="MIR 4" evidence="3">
    <location>
        <begin position="275"/>
        <end position="333"/>
    </location>
</feature>
<feature type="domain" description="MIR 5" evidence="3">
    <location>
        <begin position="343"/>
        <end position="400"/>
    </location>
</feature>
<feature type="domain" description="B30.2/SPRY 1" evidence="4">
    <location>
        <begin position="585"/>
        <end position="796"/>
    </location>
</feature>
<feature type="repeat" description="1">
    <location>
        <begin position="840"/>
        <end position="953"/>
    </location>
</feature>
<feature type="repeat" description="2">
    <location>
        <begin position="954"/>
        <end position="1068"/>
    </location>
</feature>
<feature type="domain" description="B30.2/SPRY 2" evidence="4">
    <location>
        <begin position="1012"/>
        <end position="1208"/>
    </location>
</feature>
<feature type="domain" description="B30.2/SPRY 3" evidence="4">
    <location>
        <begin position="1254"/>
        <end position="1466"/>
    </location>
</feature>
<feature type="repeat" description="3">
    <location>
        <begin position="2592"/>
        <end position="2710"/>
    </location>
</feature>
<feature type="repeat" description="4">
    <location>
        <begin position="2711"/>
        <end position="2823"/>
    </location>
</feature>
<feature type="region of interest" description="4 X approximate repeats">
    <location>
        <begin position="840"/>
        <end position="2823"/>
    </location>
</feature>
<feature type="region of interest" description="Interaction with FKBP1A" evidence="1">
    <location>
        <begin position="2325"/>
        <end position="2338"/>
    </location>
</feature>
<feature type="region of interest" description="Interaction with CALM" evidence="11">
    <location>
        <begin position="3472"/>
        <end position="3501"/>
    </location>
</feature>
<feature type="region of interest" description="Disordered" evidence="5">
    <location>
        <begin position="3587"/>
        <end position="3615"/>
    </location>
</feature>
<feature type="region of interest" description="Disordered" evidence="5">
    <location>
        <begin position="4104"/>
        <end position="4124"/>
    </location>
</feature>
<feature type="region of interest" description="Disordered" evidence="5">
    <location>
        <begin position="4305"/>
        <end position="4358"/>
    </location>
</feature>
<feature type="compositionally biased region" description="Basic and acidic residues" evidence="5">
    <location>
        <begin position="3602"/>
        <end position="3615"/>
    </location>
</feature>
<feature type="compositionally biased region" description="Acidic residues" evidence="5">
    <location>
        <begin position="4113"/>
        <end position="4122"/>
    </location>
</feature>
<feature type="compositionally biased region" description="Basic and acidic residues" evidence="5">
    <location>
        <begin position="4332"/>
        <end position="4358"/>
    </location>
</feature>
<feature type="site" description="Important for activation by Ca(2+)">
    <location>
        <position position="3885"/>
    </location>
</feature>
<feature type="splice variant" id="VSP_042305" description="In isoform 3." evidence="15 16">
    <location>
        <begin position="3341"/>
        <end position="3345"/>
    </location>
</feature>
<feature type="splice variant" id="VSP_042306" description="In isoform 2." evidence="15">
    <location>
        <begin position="4406"/>
        <end position="4434"/>
    </location>
</feature>
<feature type="splice variant" id="VSP_042307" description="In isoform 4." evidence="15">
    <location>
        <begin position="4791"/>
        <end position="4841"/>
    </location>
</feature>
<feature type="mutagenesis site" description="Reduces calcium-sensitivity by over 10000-fold." evidence="14">
    <original>E</original>
    <variation>A</variation>
    <location>
        <position position="3885"/>
    </location>
</feature>
<accession>Q9TS33</accession>
<sequence>MAEGGEGGEDEIQFLRTEDEVVLQCIATVHKEQRKFCLAAEGLGNRLCFLEPTSEAKFIPPDLCVCNFVLEQSLSVRALQEMLANTGENGGEGAAQGGGHRTLLYGHAILLRHSFSGMYLTCLTTSRSQTDKLAFDVGLREHATGEACWWTIHPASKQRSEGEKVRIGDDLILVSVSSERYLHLSISNGNIQVDASFMQTLWNVHPTCSGSSIEEGYLLGGHVVRLFHGHDECLTIPSTDQNDSQHRRIFYEAGGAGTRARSLWRVEPLRISWSGSNIRWGQAFRLRHLTTGHYLALTEDQGLLLQDRGKADTKSTAFSFRPSKETKEKLDSSHKRDIEGMGVPEIKYGDSVCFVQHIASGLWVTYKAQDAKTSRLGPLKRKVILHQEGHMDDGLTLQRCQREESQAARIIRNTTALFSQFVSGNNRTAAPVTLPIEEVLQTLHDLIAYFQPPEEEMQHEDKQNKLRSLKNRQNLFKEEGMLALVLNCIDRLNIYNSVAHFAGIAREESGMAWKEVLSLLYKLLAALIRGNRNTCAQFSNNLDWLISKLDRLESSSGILEVLHCILIESPEALNLIAEGHIKSIISLLDKHGRNHKVLDVLCSLCLCNGVAVRANQNLICDNLLPRRNLLLQTRLINDVTSIRPNIFLGVAEGSAQYKKWYFELIIDQVDPFLTAEPTHLRVGWASSSGYAPYPGGGEGWGGNGVGDDLYSYGFDGLHLWSGRIPRAVASINQHLLKSDDVVSCCLDLGVPSISFRINGQPVQGMFENFNTDGLFFPVMSFSAGVKVRFLMGGRHGEFKFLPPSGYAPCYEALLPKEKMRLEPVKEYKRDAEGVRDLLGTTQFLSQASFIPCPIDTSQVVLPPHLEKIRDRLAENIHELWGMNKIELGWTFGKMRDDNKRQHPCLVEFSKLPETEKNYNLQMSTETLKTLLALGCHIAHVNPAAEEDLKKVKLPKNYMMSNGYKPAPLDLSDVKLLPPQEILVDKLAENAHNVWAKDRIKQGWTYGIQQDLKNKRNPRLVPYALLDERTKKSNRDSLREAVRTFVGYGYNIEPSDQELADPAVEKVSIDKIRFFRVERSYAVRSGKWYFEFEVVTGGDMRVGWARPGCRPDIELGPMTKPLCLKAAGASVGTKVVGILGVPWQPGDVVGCMINLDDASMIFTLNGELLITNKGSELAFADYEIENGFVPICSLGLSQIGRMNLGTDASTFKFYTMCGLQEGFEPFAVNMNRDVAMWFSKRLPTFVNVPKDHPHIEVVRIDGTMDSPPCLKVTHKTFGTQNSNANMIYCRLSMPVECHSSFSHSPCLDSEAFQKRKQMQEILSHTTTQCFYSIRIFAGQDPSCVWVGWVTPDYHLYSEKFDLNKNCTVTVTLGDERGRVHESVKRSNCYMVWGGDVVASSQRSSRSNVDLEIGCLVDLAMGMLSFSANGKELGTCYQVEPNTKVFPAVFLQPTSTSLFQFELGKLKNAMPLSAAIFKSEEKNPVPQCPPRLDVQTIQPVLWSRMPNSFLKVETERVSERHGWVVQCLEPLQMMALHIPEENRCVDILELCEQEDLMQFHYHTLRLYSAVCALGNSRVAYALCSHVDLSQLFHAIDNKYLPGLLRSGFYDLLISIHLANAKERKLMMKNEYIIPITSTTRNIRLYPDESKKHGLPGVGPRTCLKPGFKFSTPCFVVTNEERQKQSPEIPLEILKMKALSMLTEAVQCSGAHIRDPVGGSVEFQFVPVLKLVGTLLVMGVFCDDDVRQILLLIDPSVFGEHSADTEEGAEKEEVSQVEEKAVEAGEKTSKEARKEAPVRGLLQTRLPESVKLQMCELLSYLCDCELQHRVEAIVAFGDIYVSKLQANQKFRYNELMQALNMSAALTARKTREFRSPPQEQINMLLNFQLGENCPCPEEIREELYDFHEDLLVHCGVPLEEEEEEEEDTSWTGKLRTLVYKIKGPPKPEKEQPTEEEERCPTTLKELISQTMIRWAQEDQIQDAELVRMMFNLLRRQYDSIGELLQALRKTYTISHASVSDTINLLAALGQIRSLLSVRMGREEELLMINGLGDIMNNKVFYQHPNLMRVLGMHETVMEVMVNVLGTEKSQIAFPKMVASCCRFLCYFCRISRQNQKAMFEHLSYLLENSSVGLASPSMRGSTPLDVAASSVMDNNELALGLEEPDLEKVVTYLAGCGLQSCPMLLAKGYPDVGWNPIEGERYLSFLRFAVFVNSESVEENASVVVKLLIRRPECFGPALRGEGGNGLLAAMQGAIKISESPALDLPSQGYKREVPEDGEEEEEIVHMGNAIMSFYSALIDLLGRCAPEMHLIQTGKGEAIRIRSILRSLVPTEDLVGIISIPLKLPSLNKDGSVSEPDMAANFCPDHKAPMVLFLDRVYGIKDQTFLLHLLEVGFLPDLRASASLDTVALSTTESALALNRYICSAVLPLLTRCAPLFAGTEHYTSLIDSTLQTIYRLSKGRSLTKAQRDTIEECLLAICNHLRPSMLQQLLRRLVFDVPQLNDYCKMPLKLLTNHFEQCWKYYCLPSGWGSYGLAVEEELHLTEKLFWGIFDSLSHKKYDPDLFRMSLPCLSAIAGALPPDYLDTRITATLEKQVSVDADGNFDPKPINTINFSLPEKLEYIVTKYAEHSHDKWACEKSQSGWKYGISLDENVKTHPLIRPFKTLTEKEKEIYRWPARESLKTMLAVGWTVERTKEGEALVQLRENEKLRSVSQTSQGNSYNPAPLDLSNVVLSRELQGMVEVVAENYHNIWAKKKKLELESKGGGSHPLLVPYDTLTAKEKFRDREKAQDLFKFLQVNGVIVSRGMKDMELDAFSMEKRFAYKFLKKILKYVDSAQEFIAHLEAIVSSGKTEKSPHDQEIKFFAKVLLPLVDQYFTNHRLYFLSSPLKPLSSSGYASHKEKEMVASLFCKLAALVRHRISLFGSDSTTMVSCLHILAQTLDTRTVMKSGSELVKAGLRAFFESAAEDLEKTSENLKLGKFTHSRTQIKGVSQNINYTTVALLPILTSIFEHVAQHQFGVDLLLGDVQISCYRILCSLYSLGTGKNIYVERQRPALGECLASLAAAIPVAFLEPTLNRYNALSVFNTKTPRERSILGMPDTVEEMCPDIPQLEGLMKEINDLAESGARYTEMPHVIEVILPMLCNYLSYWWERGPENLSPSTGPCCSKVTSEHLSLILGNILKIINNNLGIDEASWMKRIAVYAQPIISKARPDLLRSHFIPTLEKLKKKAVKTVQEEEQLKADGKGDTQEAELLILDEFAILCRDLYAFYPMLIRYVDNNRSNWLKSPDGDSDQLFRMVAEVFILWCKSHNFKREEQNFVIQNEINNLAFLTGDSKSKMSKAMQVKSGGQDQERKKTKRRGDLYSIQTSLIVAALKKMLPIGLNMCTPGDQELISLAKSRYSYRDTDEEVKEHLRNNLHLQEKSDDPAVKWQLNLYKDVLKSEEPSNPEKTVERVQRISAAVFHLEQVEQPLRSKKAVWHKLLSKQRKRAVVACFRMAPLYNLPRHRSINLFLHGYQRFWIETEEYSFEEKLVQDLAKSPKVEEEEEEEMEKQPDPLHQIILHFSRNALTERSKLEDDPLYTSYSSMMAKSCQSGEDEEEEDKEKTFEEKEMEKQKTLYQQARLHERGAAEMVLQMISASKGEMSPMVVETLKLGIAILNGGNAGVQQKMLDYLKVKKDAGFFQSLSGLMQSCSVLDLNAFERQNKAEGLGMVTEEGTLIVRERGEKVLQNDEFTRDLFRFLQLLCEGHNSDFQNFLRTQMGNTTTVNVIISTVDYLLRLQESISDFYWYYSGKDIIDESGQHNFSKALAVTKQIFNSLTEYIQGPCIGNQQSLAHSRLWDAVVGFLHVFANMQMKLSQDSSQIELLKELLDLLQDMVVMLLSLLEGNVVNGTIGKQMVDTLVESSTNVEMILKFFDMFLKLKDLTSSDTFKEYDPDGKGIISKKEFQKAMEGQKQYTQSEIDFLLSCAEADENDMFNYIDFVDRFHEPAKDIGFNVAVLLTNLSEHMPNDSRLKCLLDPAESVLNYFEPYLGRIEIMGGAKKIERVYFEISESSRTQWEKPQVKESKRQFIFDVVNEGGEQEKMELFVNFCEDTIFEMQLASQISESDSADRPEEEEGDEESSYVLEINGEEEEDKSFESASAFAMACASLKRNITNLLRKATLKNLRKQYRNVKKMTAKELVKVFFSFFWMLFVGLFQLFFTIVGGIFQILWSTVFGGGLVEGAKNIRVTKILGDMPDPTQFGIHDDAMEAERAEVAEAGITTELVHFVKGERGDTELMSDLFGLHPKKEGGVKHGPEVGLGDLSEIIGKDEPPTLESTVRKKRKAQAAETKAEHEAEGKVESEKADLEDGEKEDKAKEEERAEYLWAEVTKKKKRRRGQKVEKPEAFMANFFKGLEIYQTKLLHYLARNFYNLRFLALFVAFAINFILLFYKVTEEPLEEETEDVANLWNSLNDEEEEEAMVFFVLQESTGYMAPTLRALAVVHTIISLVCVVGYYCLKVPLVVFKREKEIARKLEFDGLYITEQPSEDDIKGQWDRLVINTPSFPHNYWDKFVKRKVINKYGDLYGAERIAELLGLDKNALDFSPVEETTAEAASLVSWLSSIDMKYHIWKLGVVFTDNSFLYLAWYTTMSVLGHYNNFFFAAHLLDIAMGFKTLRTILSSVTHNGKQLVLTVGLLAVVVYLYTVVAFNFFRKFYNKSEDDDEPDMKCDDMMTCYLFHMYVGVRAGGGIGDEIEDPAGDPYEMYRIVFDITFFFFVIVILLAIIQGLIIDAFGELRDQQEQVREDMETKCFICGIGNDYFDTTPHGFETHTLQEHNLANYLFFLMYLINKDETEHTGQESYVWKMYQERCWDFFPAGDCFRKQYEDQLG</sequence>
<comment type="function">
    <text evidence="6 7 11 13 14">Cytosolic calcium-activated calcium channel that mediates the release of Ca(2+) from the sarcoplasmic reticulum into the cytosol in muscle and thereby plays a role in triggering muscle contraction. May regulate Ca(2+) release by other calcium channels. Calcium channel that mediates Ca(2+)-induced Ca(2+) release from the endoplasmic reticulum in non-muscle cells. Plays a role in cellular calcium signaling. Contributes to cellular calcium ion homeostasis.</text>
</comment>
<comment type="function">
    <molecule>Isoform 2</molecule>
    <text evidence="8">Lacks a predicted transmembrane segment and does not form functional calcium channels by itself; however, it can form tetramers with isoforms that contain the full complement of transmembrane segments and modulate their activity.</text>
</comment>
<comment type="catalytic activity">
    <reaction evidence="8 13 14">
        <text>Ca(2+)(in) = Ca(2+)(out)</text>
        <dbReference type="Rhea" id="RHEA:29671"/>
        <dbReference type="ChEBI" id="CHEBI:29108"/>
    </reaction>
</comment>
<comment type="activity regulation">
    <text evidence="13">Channel activity is modulated by the alkaloid ryanodine that binds to the open calcium-release channel with high affinity. At low concentrations, ryanodine maintains the channel in an open conformation. High ryanodine concentrations inhibit channel activity. Channel activity is regulated by calmodulin (CALM). The calcium release is activated by elevated cytoplasmic calcium levels in the micromolar range, by caffeine and adenine nucleotides, such as AMP and ATP. Inhibited by Mg(2+) and ruthenium red.</text>
</comment>
<comment type="subunit">
    <text evidence="6 7 8 11 12 14">Homotetramer. Isoform 2 can form tetramers with isoform 1. Heterotetramer with RYR2. Interacts with FKBP1A. Interacts with CALM. Interacts with SELENON (PubMed:18713863).</text>
</comment>
<comment type="interaction">
    <interactant intactId="EBI-9542578">
        <id>Q9TS33</id>
    </interactant>
    <interactant intactId="EBI-9542578">
        <id>Q9TS33</id>
        <label>RYR3</label>
    </interactant>
    <organismsDiffer>false</organismsDiffer>
    <experiments>2</experiments>
</comment>
<comment type="subcellular location">
    <subcellularLocation>
        <location evidence="6 12">Sarcoplasmic reticulum membrane</location>
        <topology evidence="2">Multi-pass membrane protein</topology>
    </subcellularLocation>
</comment>
<comment type="alternative products">
    <event type="alternative splicing"/>
    <isoform>
        <id>Q9TS33-1</id>
        <name>1</name>
        <sequence type="displayed"/>
    </isoform>
    <isoform>
        <id>Q9TS33-2</id>
        <name>2</name>
        <name>AS-8a</name>
        <sequence type="described" ref="VSP_042306"/>
    </isoform>
    <isoform>
        <id>Q9TS33-3</id>
        <name>3</name>
        <sequence type="described" ref="VSP_042305"/>
    </isoform>
    <isoform>
        <id>Q9TS33-4</id>
        <name>4</name>
        <sequence type="described" ref="VSP_042307"/>
    </isoform>
    <text>Additional isoforms seem to exist.</text>
</comment>
<comment type="tissue specificity">
    <text evidence="6 8 9 10 11 13">Detected in skeletal muscle from young rabbits and in adult diaphragm muscle (at protein level). Detected in brain, especially in corpus striatum, thalamus and hippocampus. Detected in taenia coli, uterus, vas deferens, aorta, stomach, small intestine, heart, diaphragm and ureter. Isoform 2 is highly expressed in uterus and aorta, and at much lower levels in heart, brain and diaphragm.</text>
</comment>
<comment type="developmental stage">
    <text evidence="10">Ubiquitous in skeletal muscle in neonates and in 15 day old rabbits. In adult, detected in diaphragm muscle, and in a subset of skeletal muscles including digastricus, pterygoideus, tongue and masseter.</text>
</comment>
<comment type="domain">
    <text evidence="18">The calcium release channel activity resides in the C-terminal region while the remaining part of the protein resides in the cytoplasm.</text>
</comment>
<comment type="miscellaneous">
    <molecule>Isoform 2</molecule>
    <text evidence="8">Lacks a predicted transmembrane segment and does not form functional calcium channels.</text>
</comment>
<comment type="similarity">
    <text evidence="17">Belongs to the ryanodine receptor (TC 1.A.3.1) family. RYR3 subfamily.</text>
</comment>
<name>RYR3_RABIT</name>
<protein>
    <recommendedName>
        <fullName evidence="19">Ryanodine receptor 3</fullName>
        <shortName>RYR-3</shortName>
        <shortName evidence="16">RyR3</shortName>
    </recommendedName>
    <alternativeName>
        <fullName>Brain ryanodine receptor-calcium release channel</fullName>
    </alternativeName>
    <alternativeName>
        <fullName>Brain-type ryanodine receptor</fullName>
    </alternativeName>
    <alternativeName>
        <fullName>Type 3 ryanodine receptor</fullName>
    </alternativeName>
</protein>
<organism>
    <name type="scientific">Oryctolagus cuniculus</name>
    <name type="common">Rabbit</name>
    <dbReference type="NCBI Taxonomy" id="9986"/>
    <lineage>
        <taxon>Eukaryota</taxon>
        <taxon>Metazoa</taxon>
        <taxon>Chordata</taxon>
        <taxon>Craniata</taxon>
        <taxon>Vertebrata</taxon>
        <taxon>Euteleostomi</taxon>
        <taxon>Mammalia</taxon>
        <taxon>Eutheria</taxon>
        <taxon>Euarchontoglires</taxon>
        <taxon>Glires</taxon>
        <taxon>Lagomorpha</taxon>
        <taxon>Leporidae</taxon>
        <taxon>Oryctolagus</taxon>
    </lineage>
</organism>
<gene>
    <name evidence="16" type="primary">RYR3</name>
</gene>